<proteinExistence type="inferred from homology"/>
<dbReference type="EC" id="2.7.8.-" evidence="1"/>
<dbReference type="EMBL" id="CU928158">
    <property type="protein sequence ID" value="CAQ89221.1"/>
    <property type="molecule type" value="Genomic_DNA"/>
</dbReference>
<dbReference type="RefSeq" id="WP_000206880.1">
    <property type="nucleotide sequence ID" value="NC_011740.1"/>
</dbReference>
<dbReference type="SMR" id="B7LS29"/>
<dbReference type="GeneID" id="75057257"/>
<dbReference type="KEGG" id="efe:EFER_1705"/>
<dbReference type="HOGENOM" id="CLU_038053_1_0_6"/>
<dbReference type="OrthoDB" id="9814092at2"/>
<dbReference type="Proteomes" id="UP000000745">
    <property type="component" value="Chromosome"/>
</dbReference>
<dbReference type="GO" id="GO:0005886">
    <property type="term" value="C:plasma membrane"/>
    <property type="evidence" value="ECO:0007669"/>
    <property type="project" value="UniProtKB-SubCell"/>
</dbReference>
<dbReference type="GO" id="GO:0008808">
    <property type="term" value="F:cardiolipin synthase activity"/>
    <property type="evidence" value="ECO:0007669"/>
    <property type="project" value="InterPro"/>
</dbReference>
<dbReference type="GO" id="GO:0032049">
    <property type="term" value="P:cardiolipin biosynthetic process"/>
    <property type="evidence" value="ECO:0007669"/>
    <property type="project" value="InterPro"/>
</dbReference>
<dbReference type="CDD" id="cd09152">
    <property type="entry name" value="PLDc_EcCLS_like_1"/>
    <property type="match status" value="1"/>
</dbReference>
<dbReference type="CDD" id="cd09158">
    <property type="entry name" value="PLDc_EcCLS_like_2"/>
    <property type="match status" value="1"/>
</dbReference>
<dbReference type="FunFam" id="3.30.870.10:FF:000002">
    <property type="entry name" value="Cardiolipin synthase A"/>
    <property type="match status" value="1"/>
</dbReference>
<dbReference type="FunFam" id="3.30.870.10:FF:000003">
    <property type="entry name" value="Cardiolipin synthase A"/>
    <property type="match status" value="1"/>
</dbReference>
<dbReference type="Gene3D" id="3.30.870.10">
    <property type="entry name" value="Endonuclease Chain A"/>
    <property type="match status" value="2"/>
</dbReference>
<dbReference type="HAMAP" id="MF_00190">
    <property type="entry name" value="Cardiolipin_synth_ClsA"/>
    <property type="match status" value="1"/>
</dbReference>
<dbReference type="InterPro" id="IPR022924">
    <property type="entry name" value="Cardiolipin_synthase"/>
</dbReference>
<dbReference type="InterPro" id="IPR030840">
    <property type="entry name" value="CL_synthase_A"/>
</dbReference>
<dbReference type="InterPro" id="IPR027379">
    <property type="entry name" value="CLS_N"/>
</dbReference>
<dbReference type="InterPro" id="IPR025202">
    <property type="entry name" value="PLD-like_dom"/>
</dbReference>
<dbReference type="InterPro" id="IPR001736">
    <property type="entry name" value="PLipase_D/transphosphatidylase"/>
</dbReference>
<dbReference type="NCBIfam" id="TIGR04265">
    <property type="entry name" value="bac_cardiolipin"/>
    <property type="match status" value="1"/>
</dbReference>
<dbReference type="PANTHER" id="PTHR21248">
    <property type="entry name" value="CARDIOLIPIN SYNTHASE"/>
    <property type="match status" value="1"/>
</dbReference>
<dbReference type="PANTHER" id="PTHR21248:SF22">
    <property type="entry name" value="PHOSPHOLIPASE D"/>
    <property type="match status" value="1"/>
</dbReference>
<dbReference type="Pfam" id="PF13091">
    <property type="entry name" value="PLDc_2"/>
    <property type="match status" value="2"/>
</dbReference>
<dbReference type="Pfam" id="PF13396">
    <property type="entry name" value="PLDc_N"/>
    <property type="match status" value="1"/>
</dbReference>
<dbReference type="SMART" id="SM00155">
    <property type="entry name" value="PLDc"/>
    <property type="match status" value="2"/>
</dbReference>
<dbReference type="SUPFAM" id="SSF56024">
    <property type="entry name" value="Phospholipase D/nuclease"/>
    <property type="match status" value="2"/>
</dbReference>
<dbReference type="PROSITE" id="PS50035">
    <property type="entry name" value="PLD"/>
    <property type="match status" value="2"/>
</dbReference>
<organism>
    <name type="scientific">Escherichia fergusonii (strain ATCC 35469 / DSM 13698 / CCUG 18766 / IAM 14443 / JCM 21226 / LMG 7866 / NBRC 102419 / NCTC 12128 / CDC 0568-73)</name>
    <dbReference type="NCBI Taxonomy" id="585054"/>
    <lineage>
        <taxon>Bacteria</taxon>
        <taxon>Pseudomonadati</taxon>
        <taxon>Pseudomonadota</taxon>
        <taxon>Gammaproteobacteria</taxon>
        <taxon>Enterobacterales</taxon>
        <taxon>Enterobacteriaceae</taxon>
        <taxon>Escherichia</taxon>
    </lineage>
</organism>
<accession>B7LS29</accession>
<sequence length="486" mass="54902">MTTFYTVVSWLVILGYWLLIAGVTLRILMKRRAVPSAMAWLLIIYILPLVGIIAYLSFGELHLGKRRAERARAMWPSTAKWLNDLKSCKHIFAEENSSVASSLFKLCERRQGIAGVKGNQLQLLTDSDDVMQALIRDIQLARHNIEMVFYIWQPGGMADKVAESLMAAARRGIHCRLMLDSAGSVAFFRSPWAAMMRNAGIEVVEALKVNLMRVFLRRMDLRQHRKMIMIDNYIAYTGSMNMVDPRFFKQDAGVGQWVDVMARMEGPIATAMGVIYSCDWEIETGKRILPPPPDVNIMPFEQASGHTIHTIASGPGFPEDLIHQALLTATYSAREYLIMTTPYFVPSDDLLHAICTAAQRGVDVSIILPRKNDSMLVGWASRAFFTELLAAGVKIYQFEGGLLHTKSVLVDGELSLVGTVNLDMRSLWLNFEITLAIDDKGFGADLAAVQDDYISRSRLLDERLWLKRPLWQRVAERLFYFFSPLL</sequence>
<keyword id="KW-0997">Cell inner membrane</keyword>
<keyword id="KW-1003">Cell membrane</keyword>
<keyword id="KW-0444">Lipid biosynthesis</keyword>
<keyword id="KW-0443">Lipid metabolism</keyword>
<keyword id="KW-0472">Membrane</keyword>
<keyword id="KW-0594">Phospholipid biosynthesis</keyword>
<keyword id="KW-1208">Phospholipid metabolism</keyword>
<keyword id="KW-0677">Repeat</keyword>
<keyword id="KW-0808">Transferase</keyword>
<keyword id="KW-0812">Transmembrane</keyword>
<keyword id="KW-1133">Transmembrane helix</keyword>
<evidence type="ECO:0000255" key="1">
    <source>
        <dbReference type="HAMAP-Rule" id="MF_00190"/>
    </source>
</evidence>
<reference key="1">
    <citation type="journal article" date="2009" name="PLoS Genet.">
        <title>Organised genome dynamics in the Escherichia coli species results in highly diverse adaptive paths.</title>
        <authorList>
            <person name="Touchon M."/>
            <person name="Hoede C."/>
            <person name="Tenaillon O."/>
            <person name="Barbe V."/>
            <person name="Baeriswyl S."/>
            <person name="Bidet P."/>
            <person name="Bingen E."/>
            <person name="Bonacorsi S."/>
            <person name="Bouchier C."/>
            <person name="Bouvet O."/>
            <person name="Calteau A."/>
            <person name="Chiapello H."/>
            <person name="Clermont O."/>
            <person name="Cruveiller S."/>
            <person name="Danchin A."/>
            <person name="Diard M."/>
            <person name="Dossat C."/>
            <person name="Karoui M.E."/>
            <person name="Frapy E."/>
            <person name="Garry L."/>
            <person name="Ghigo J.M."/>
            <person name="Gilles A.M."/>
            <person name="Johnson J."/>
            <person name="Le Bouguenec C."/>
            <person name="Lescat M."/>
            <person name="Mangenot S."/>
            <person name="Martinez-Jehanne V."/>
            <person name="Matic I."/>
            <person name="Nassif X."/>
            <person name="Oztas S."/>
            <person name="Petit M.A."/>
            <person name="Pichon C."/>
            <person name="Rouy Z."/>
            <person name="Ruf C.S."/>
            <person name="Schneider D."/>
            <person name="Tourret J."/>
            <person name="Vacherie B."/>
            <person name="Vallenet D."/>
            <person name="Medigue C."/>
            <person name="Rocha E.P.C."/>
            <person name="Denamur E."/>
        </authorList>
    </citation>
    <scope>NUCLEOTIDE SEQUENCE [LARGE SCALE GENOMIC DNA]</scope>
    <source>
        <strain>ATCC 35469 / DSM 13698 / BCRC 15582 / CCUG 18766 / IAM 14443 / JCM 21226 / LMG 7866 / NBRC 102419 / NCTC 12128 / CDC 0568-73</strain>
    </source>
</reference>
<comment type="function">
    <text evidence="1">Catalyzes the reversible phosphatidyl group transfer from one phosphatidylglycerol molecule to another to form cardiolipin (CL) (diphosphatidylglycerol) and glycerol.</text>
</comment>
<comment type="catalytic activity">
    <reaction evidence="1">
        <text>2 a 1,2-diacyl-sn-glycero-3-phospho-(1'-sn-glycerol) = a cardiolipin + glycerol</text>
        <dbReference type="Rhea" id="RHEA:31451"/>
        <dbReference type="ChEBI" id="CHEBI:17754"/>
        <dbReference type="ChEBI" id="CHEBI:62237"/>
        <dbReference type="ChEBI" id="CHEBI:64716"/>
    </reaction>
</comment>
<comment type="subcellular location">
    <subcellularLocation>
        <location evidence="1">Cell inner membrane</location>
        <topology evidence="1">Multi-pass membrane protein</topology>
    </subcellularLocation>
</comment>
<comment type="similarity">
    <text evidence="1">Belongs to the phospholipase D family. Cardiolipin synthase subfamily. ClsA sub-subfamily.</text>
</comment>
<protein>
    <recommendedName>
        <fullName evidence="1">Cardiolipin synthase A</fullName>
        <shortName evidence="1">CL synthase</shortName>
        <ecNumber evidence="1">2.7.8.-</ecNumber>
    </recommendedName>
</protein>
<feature type="chain" id="PRO_1000118591" description="Cardiolipin synthase A">
    <location>
        <begin position="1"/>
        <end position="486"/>
    </location>
</feature>
<feature type="transmembrane region" description="Helical" evidence="1">
    <location>
        <begin position="3"/>
        <end position="23"/>
    </location>
</feature>
<feature type="transmembrane region" description="Helical" evidence="1">
    <location>
        <begin position="38"/>
        <end position="58"/>
    </location>
</feature>
<feature type="domain" description="PLD phosphodiesterase 1" evidence="1">
    <location>
        <begin position="219"/>
        <end position="246"/>
    </location>
</feature>
<feature type="domain" description="PLD phosphodiesterase 2" evidence="1">
    <location>
        <begin position="399"/>
        <end position="426"/>
    </location>
</feature>
<feature type="active site" evidence="1">
    <location>
        <position position="224"/>
    </location>
</feature>
<feature type="active site" evidence="1">
    <location>
        <position position="226"/>
    </location>
</feature>
<feature type="active site" evidence="1">
    <location>
        <position position="231"/>
    </location>
</feature>
<feature type="active site" evidence="1">
    <location>
        <position position="404"/>
    </location>
</feature>
<feature type="active site" evidence="1">
    <location>
        <position position="406"/>
    </location>
</feature>
<feature type="active site" evidence="1">
    <location>
        <position position="411"/>
    </location>
</feature>
<name>CLSA_ESCF3</name>
<gene>
    <name evidence="1" type="primary">clsA</name>
    <name type="synonym">cls</name>
    <name type="ordered locus">EFER_1705</name>
</gene>